<dbReference type="EMBL" id="BX897699">
    <property type="protein sequence ID" value="CAF27005.1"/>
    <property type="molecule type" value="Genomic_DNA"/>
</dbReference>
<dbReference type="RefSeq" id="WP_011180144.1">
    <property type="nucleotide sequence ID" value="NZ_LRIJ02000001.1"/>
</dbReference>
<dbReference type="SMR" id="Q6G5I3"/>
<dbReference type="PaxDb" id="283166-BH01930"/>
<dbReference type="EnsemblBacteria" id="CAF27005">
    <property type="protein sequence ID" value="CAF27005"/>
    <property type="gene ID" value="BH01930"/>
</dbReference>
<dbReference type="GeneID" id="92984860"/>
<dbReference type="KEGG" id="bhe:BH01930"/>
<dbReference type="eggNOG" id="COG1780">
    <property type="taxonomic scope" value="Bacteria"/>
</dbReference>
<dbReference type="OrthoDB" id="350535at2"/>
<dbReference type="Proteomes" id="UP000000421">
    <property type="component" value="Chromosome"/>
</dbReference>
<dbReference type="GO" id="GO:0010181">
    <property type="term" value="F:FMN binding"/>
    <property type="evidence" value="ECO:0007669"/>
    <property type="project" value="InterPro"/>
</dbReference>
<dbReference type="GO" id="GO:0036211">
    <property type="term" value="P:protein modification process"/>
    <property type="evidence" value="ECO:0007669"/>
    <property type="project" value="InterPro"/>
</dbReference>
<dbReference type="Gene3D" id="3.40.50.360">
    <property type="match status" value="1"/>
</dbReference>
<dbReference type="HAMAP" id="MF_00128">
    <property type="entry name" value="NrdI"/>
    <property type="match status" value="1"/>
</dbReference>
<dbReference type="InterPro" id="IPR029039">
    <property type="entry name" value="Flavoprotein-like_sf"/>
</dbReference>
<dbReference type="InterPro" id="IPR020852">
    <property type="entry name" value="RNR_Ib_NrdI_bac"/>
</dbReference>
<dbReference type="InterPro" id="IPR004465">
    <property type="entry name" value="RNR_NrdI"/>
</dbReference>
<dbReference type="NCBIfam" id="TIGR00333">
    <property type="entry name" value="nrdI"/>
    <property type="match status" value="1"/>
</dbReference>
<dbReference type="PANTHER" id="PTHR37297">
    <property type="entry name" value="PROTEIN NRDI"/>
    <property type="match status" value="1"/>
</dbReference>
<dbReference type="PANTHER" id="PTHR37297:SF1">
    <property type="entry name" value="PROTEIN NRDI"/>
    <property type="match status" value="1"/>
</dbReference>
<dbReference type="Pfam" id="PF07972">
    <property type="entry name" value="Flavodoxin_NdrI"/>
    <property type="match status" value="1"/>
</dbReference>
<dbReference type="PIRSF" id="PIRSF005087">
    <property type="entry name" value="NrdI"/>
    <property type="match status" value="1"/>
</dbReference>
<dbReference type="SUPFAM" id="SSF52218">
    <property type="entry name" value="Flavoproteins"/>
    <property type="match status" value="1"/>
</dbReference>
<sequence length="132" mass="15156">MGLIVYYSSATGNTEYFVSQLDQRLFKIDKKKPSMLVDEPYVLVVPTYADGEGKMAVPKAVIRFLNEDENRKLIRGVIGGGNRNFGRYYSLASKIIAEKCFVPCLYRFELRGTEEDIICVKKGLERFWKQLV</sequence>
<comment type="function">
    <text evidence="1">Probably involved in ribonucleotide reductase function.</text>
</comment>
<comment type="similarity">
    <text evidence="1">Belongs to the NrdI family.</text>
</comment>
<accession>Q6G5I3</accession>
<name>NRDI_BARHE</name>
<feature type="chain" id="PRO_1000016492" description="Protein NrdI">
    <location>
        <begin position="1"/>
        <end position="132"/>
    </location>
</feature>
<reference key="1">
    <citation type="journal article" date="2004" name="Proc. Natl. Acad. Sci. U.S.A.">
        <title>The louse-borne human pathogen Bartonella quintana is a genomic derivative of the zoonotic agent Bartonella henselae.</title>
        <authorList>
            <person name="Alsmark U.C.M."/>
            <person name="Frank A.C."/>
            <person name="Karlberg E.O."/>
            <person name="Legault B.-A."/>
            <person name="Ardell D.H."/>
            <person name="Canbaeck B."/>
            <person name="Eriksson A.-S."/>
            <person name="Naeslund A.K."/>
            <person name="Handley S.A."/>
            <person name="Huvet M."/>
            <person name="La Scola B."/>
            <person name="Holmberg M."/>
            <person name="Andersson S.G.E."/>
        </authorList>
    </citation>
    <scope>NUCLEOTIDE SEQUENCE [LARGE SCALE GENOMIC DNA]</scope>
    <source>
        <strain>ATCC 49882 / DSM 28221 / CCUG 30454 / Houston 1</strain>
    </source>
</reference>
<proteinExistence type="inferred from homology"/>
<organism>
    <name type="scientific">Bartonella henselae (strain ATCC 49882 / DSM 28221 / CCUG 30454 / Houston 1)</name>
    <name type="common">Rochalimaea henselae</name>
    <dbReference type="NCBI Taxonomy" id="283166"/>
    <lineage>
        <taxon>Bacteria</taxon>
        <taxon>Pseudomonadati</taxon>
        <taxon>Pseudomonadota</taxon>
        <taxon>Alphaproteobacteria</taxon>
        <taxon>Hyphomicrobiales</taxon>
        <taxon>Bartonellaceae</taxon>
        <taxon>Bartonella</taxon>
    </lineage>
</organism>
<gene>
    <name evidence="1" type="primary">nrdI</name>
    <name type="ordered locus">BH01930</name>
</gene>
<evidence type="ECO:0000255" key="1">
    <source>
        <dbReference type="HAMAP-Rule" id="MF_00128"/>
    </source>
</evidence>
<protein>
    <recommendedName>
        <fullName evidence="1">Protein NrdI</fullName>
    </recommendedName>
</protein>